<dbReference type="EMBL" id="CP000931">
    <property type="protein sequence ID" value="ABZ77061.1"/>
    <property type="molecule type" value="Genomic_DNA"/>
</dbReference>
<dbReference type="RefSeq" id="WP_012277589.1">
    <property type="nucleotide sequence ID" value="NC_010334.1"/>
</dbReference>
<dbReference type="SMR" id="B0TK42"/>
<dbReference type="STRING" id="458817.Shal_2504"/>
<dbReference type="KEGG" id="shl:Shal_2504"/>
<dbReference type="eggNOG" id="COG2835">
    <property type="taxonomic scope" value="Bacteria"/>
</dbReference>
<dbReference type="HOGENOM" id="CLU_155659_3_1_6"/>
<dbReference type="OrthoDB" id="9812205at2"/>
<dbReference type="Proteomes" id="UP000001317">
    <property type="component" value="Chromosome"/>
</dbReference>
<dbReference type="GO" id="GO:0005829">
    <property type="term" value="C:cytosol"/>
    <property type="evidence" value="ECO:0007669"/>
    <property type="project" value="TreeGrafter"/>
</dbReference>
<dbReference type="FunFam" id="2.20.25.10:FF:000002">
    <property type="entry name" value="UPF0434 protein YcaR"/>
    <property type="match status" value="1"/>
</dbReference>
<dbReference type="Gene3D" id="2.20.25.10">
    <property type="match status" value="1"/>
</dbReference>
<dbReference type="HAMAP" id="MF_01187">
    <property type="entry name" value="UPF0434"/>
    <property type="match status" value="1"/>
</dbReference>
<dbReference type="InterPro" id="IPR005651">
    <property type="entry name" value="Trm112-like"/>
</dbReference>
<dbReference type="PANTHER" id="PTHR33505:SF4">
    <property type="entry name" value="PROTEIN PREY, MITOCHONDRIAL"/>
    <property type="match status" value="1"/>
</dbReference>
<dbReference type="PANTHER" id="PTHR33505">
    <property type="entry name" value="ZGC:162634"/>
    <property type="match status" value="1"/>
</dbReference>
<dbReference type="Pfam" id="PF03966">
    <property type="entry name" value="Trm112p"/>
    <property type="match status" value="1"/>
</dbReference>
<dbReference type="SUPFAM" id="SSF158997">
    <property type="entry name" value="Trm112p-like"/>
    <property type="match status" value="1"/>
</dbReference>
<reference key="1">
    <citation type="submission" date="2008-01" db="EMBL/GenBank/DDBJ databases">
        <title>Complete sequence of Shewanella halifaxensis HAW-EB4.</title>
        <authorList>
            <consortium name="US DOE Joint Genome Institute"/>
            <person name="Copeland A."/>
            <person name="Lucas S."/>
            <person name="Lapidus A."/>
            <person name="Glavina del Rio T."/>
            <person name="Dalin E."/>
            <person name="Tice H."/>
            <person name="Bruce D."/>
            <person name="Goodwin L."/>
            <person name="Pitluck S."/>
            <person name="Sims D."/>
            <person name="Brettin T."/>
            <person name="Detter J.C."/>
            <person name="Han C."/>
            <person name="Kuske C.R."/>
            <person name="Schmutz J."/>
            <person name="Larimer F."/>
            <person name="Land M."/>
            <person name="Hauser L."/>
            <person name="Kyrpides N."/>
            <person name="Kim E."/>
            <person name="Zhao J.-S."/>
            <person name="Richardson P."/>
        </authorList>
    </citation>
    <scope>NUCLEOTIDE SEQUENCE [LARGE SCALE GENOMIC DNA]</scope>
    <source>
        <strain>HAW-EB4</strain>
    </source>
</reference>
<protein>
    <recommendedName>
        <fullName evidence="1">UPF0434 protein Shal_2504</fullName>
    </recommendedName>
</protein>
<proteinExistence type="inferred from homology"/>
<evidence type="ECO:0000255" key="1">
    <source>
        <dbReference type="HAMAP-Rule" id="MF_01187"/>
    </source>
</evidence>
<accession>B0TK42</accession>
<sequence length="57" mass="6430">MAFDKKLLEIVACPVCKGKLEYNKEAQQLICKADRLVYPINDGIPVLLENKAEPLIE</sequence>
<feature type="chain" id="PRO_1000085464" description="UPF0434 protein Shal_2504">
    <location>
        <begin position="1"/>
        <end position="57"/>
    </location>
</feature>
<comment type="similarity">
    <text evidence="1">Belongs to the UPF0434 family.</text>
</comment>
<organism>
    <name type="scientific">Shewanella halifaxensis (strain HAW-EB4)</name>
    <dbReference type="NCBI Taxonomy" id="458817"/>
    <lineage>
        <taxon>Bacteria</taxon>
        <taxon>Pseudomonadati</taxon>
        <taxon>Pseudomonadota</taxon>
        <taxon>Gammaproteobacteria</taxon>
        <taxon>Alteromonadales</taxon>
        <taxon>Shewanellaceae</taxon>
        <taxon>Shewanella</taxon>
    </lineage>
</organism>
<gene>
    <name type="ordered locus">Shal_2504</name>
</gene>
<name>Y2504_SHEHH</name>